<feature type="chain" id="PRO_0000129046" description="Hydrogenase maturation factor HypA">
    <location>
        <begin position="1"/>
        <end position="113"/>
    </location>
</feature>
<feature type="binding site" evidence="1">
    <location>
        <position position="2"/>
    </location>
    <ligand>
        <name>Ni(2+)</name>
        <dbReference type="ChEBI" id="CHEBI:49786"/>
    </ligand>
</feature>
<feature type="binding site" evidence="1">
    <location>
        <position position="73"/>
    </location>
    <ligand>
        <name>Zn(2+)</name>
        <dbReference type="ChEBI" id="CHEBI:29105"/>
    </ligand>
</feature>
<feature type="binding site" evidence="1">
    <location>
        <position position="76"/>
    </location>
    <ligand>
        <name>Zn(2+)</name>
        <dbReference type="ChEBI" id="CHEBI:29105"/>
    </ligand>
</feature>
<feature type="binding site" evidence="1">
    <location>
        <position position="89"/>
    </location>
    <ligand>
        <name>Zn(2+)</name>
        <dbReference type="ChEBI" id="CHEBI:29105"/>
    </ligand>
</feature>
<feature type="binding site" evidence="1">
    <location>
        <position position="92"/>
    </location>
    <ligand>
        <name>Zn(2+)</name>
        <dbReference type="ChEBI" id="CHEBI:29105"/>
    </ligand>
</feature>
<reference key="1">
    <citation type="journal article" date="1993" name="Mol. Microbiol.">
        <title>Organization of the genes necessary for hydrogenase expression in Rhodobacter capsulatus. Sequence analysis and identification of two hyp regulatory mutants.</title>
        <authorList>
            <person name="Colbeau A."/>
            <person name="Richaud P."/>
            <person name="Toussaint B."/>
            <person name="Caballero F.J."/>
            <person name="Elster C."/>
            <person name="Delphin C."/>
            <person name="Smith R.L."/>
            <person name="Chabert J."/>
            <person name="Vignais P.M."/>
        </authorList>
    </citation>
    <scope>NUCLEOTIDE SEQUENCE [GENOMIC DNA]</scope>
    <source>
        <strain>ATCC 33303 / B10</strain>
    </source>
</reference>
<reference key="2">
    <citation type="journal article" date="1991" name="J. Bacteriol.">
        <title>Clustering of genes necessary for hydrogen oxidation in Rhodobacter capsulatus.</title>
        <authorList>
            <person name="Xu H.-W."/>
            <person name="Wall J.D."/>
        </authorList>
    </citation>
    <scope>NUCLEOTIDE SEQUENCE [GENOMIC DNA]</scope>
</reference>
<protein>
    <recommendedName>
        <fullName evidence="1">Hydrogenase maturation factor HypA</fullName>
    </recommendedName>
    <alternativeName>
        <fullName>Protein HupL</fullName>
    </alternativeName>
</protein>
<accession>P26409</accession>
<comment type="function">
    <text evidence="1">Involved in the maturation of [NiFe] hydrogenases. Required for nickel insertion into the metal center of the hydrogenase.</text>
</comment>
<comment type="similarity">
    <text evidence="1 2">Belongs to the HypA/HybF family.</text>
</comment>
<dbReference type="EMBL" id="X61007">
    <property type="protein sequence ID" value="CAA43325.1"/>
    <property type="molecule type" value="Genomic_DNA"/>
</dbReference>
<dbReference type="EMBL" id="M55089">
    <property type="protein sequence ID" value="AAA72925.1"/>
    <property type="molecule type" value="Genomic_DNA"/>
</dbReference>
<dbReference type="PIR" id="C38532">
    <property type="entry name" value="C38532"/>
</dbReference>
<dbReference type="RefSeq" id="WP_013066520.1">
    <property type="nucleotide sequence ID" value="NZ_VIBE01000017.1"/>
</dbReference>
<dbReference type="SMR" id="P26409"/>
<dbReference type="GeneID" id="31489718"/>
<dbReference type="OMA" id="ILLCPCG"/>
<dbReference type="GO" id="GO:0016151">
    <property type="term" value="F:nickel cation binding"/>
    <property type="evidence" value="ECO:0007669"/>
    <property type="project" value="UniProtKB-UniRule"/>
</dbReference>
<dbReference type="GO" id="GO:0008270">
    <property type="term" value="F:zinc ion binding"/>
    <property type="evidence" value="ECO:0007669"/>
    <property type="project" value="UniProtKB-UniRule"/>
</dbReference>
<dbReference type="GO" id="GO:0051604">
    <property type="term" value="P:protein maturation"/>
    <property type="evidence" value="ECO:0007669"/>
    <property type="project" value="InterPro"/>
</dbReference>
<dbReference type="GO" id="GO:0036211">
    <property type="term" value="P:protein modification process"/>
    <property type="evidence" value="ECO:0007669"/>
    <property type="project" value="UniProtKB-UniRule"/>
</dbReference>
<dbReference type="Gene3D" id="3.30.2320.80">
    <property type="match status" value="1"/>
</dbReference>
<dbReference type="HAMAP" id="MF_00213">
    <property type="entry name" value="HypA_HybF"/>
    <property type="match status" value="1"/>
</dbReference>
<dbReference type="InterPro" id="IPR020538">
    <property type="entry name" value="Hydgase_Ni_incorp_HypA/HybF_CS"/>
</dbReference>
<dbReference type="InterPro" id="IPR000688">
    <property type="entry name" value="HypA/HybF"/>
</dbReference>
<dbReference type="NCBIfam" id="TIGR00100">
    <property type="entry name" value="hypA"/>
    <property type="match status" value="1"/>
</dbReference>
<dbReference type="PANTHER" id="PTHR34535">
    <property type="entry name" value="HYDROGENASE MATURATION FACTOR HYPA"/>
    <property type="match status" value="1"/>
</dbReference>
<dbReference type="PANTHER" id="PTHR34535:SF3">
    <property type="entry name" value="HYDROGENASE MATURATION FACTOR HYPA"/>
    <property type="match status" value="1"/>
</dbReference>
<dbReference type="Pfam" id="PF01155">
    <property type="entry name" value="HypA"/>
    <property type="match status" value="1"/>
</dbReference>
<dbReference type="PIRSF" id="PIRSF004761">
    <property type="entry name" value="Hydrgn_mat_HypA"/>
    <property type="match status" value="1"/>
</dbReference>
<dbReference type="PROSITE" id="PS01249">
    <property type="entry name" value="HYPA"/>
    <property type="match status" value="1"/>
</dbReference>
<evidence type="ECO:0000255" key="1">
    <source>
        <dbReference type="HAMAP-Rule" id="MF_00213"/>
    </source>
</evidence>
<evidence type="ECO:0000305" key="2"/>
<sequence length="113" mass="12194">MHEMSIVEGIRTAIEEAARANGFAKVTRVRLEIGRLAGVERAALDFAFDVVLRGSLAEGAAVQIIDLPGQAACFDCGKTVEIEHRLDICPECGGTRLLVQGGDEMRIKDLEVL</sequence>
<gene>
    <name evidence="1" type="primary">hypA</name>
    <name type="synonym">hupL</name>
</gene>
<name>HYPA_RHOCA</name>
<proteinExistence type="inferred from homology"/>
<keyword id="KW-0479">Metal-binding</keyword>
<keyword id="KW-0533">Nickel</keyword>
<keyword id="KW-0862">Zinc</keyword>
<organism>
    <name type="scientific">Rhodobacter capsulatus</name>
    <name type="common">Rhodopseudomonas capsulata</name>
    <dbReference type="NCBI Taxonomy" id="1061"/>
    <lineage>
        <taxon>Bacteria</taxon>
        <taxon>Pseudomonadati</taxon>
        <taxon>Pseudomonadota</taxon>
        <taxon>Alphaproteobacteria</taxon>
        <taxon>Rhodobacterales</taxon>
        <taxon>Rhodobacter group</taxon>
        <taxon>Rhodobacter</taxon>
    </lineage>
</organism>